<protein>
    <recommendedName>
        <fullName evidence="1">4-hydroxythreonine-4-phosphate dehydrogenase</fullName>
        <ecNumber evidence="1">1.1.1.262</ecNumber>
    </recommendedName>
    <alternativeName>
        <fullName evidence="1">4-(phosphohydroxy)-L-threonine dehydrogenase</fullName>
    </alternativeName>
</protein>
<accession>Q2JSC8</accession>
<organism>
    <name type="scientific">Synechococcus sp. (strain JA-3-3Ab)</name>
    <name type="common">Cyanobacteria bacterium Yellowstone A-Prime</name>
    <dbReference type="NCBI Taxonomy" id="321327"/>
    <lineage>
        <taxon>Bacteria</taxon>
        <taxon>Bacillati</taxon>
        <taxon>Cyanobacteriota</taxon>
        <taxon>Cyanophyceae</taxon>
        <taxon>Synechococcales</taxon>
        <taxon>Synechococcaceae</taxon>
        <taxon>Synechococcus</taxon>
    </lineage>
</organism>
<keyword id="KW-0963">Cytoplasm</keyword>
<keyword id="KW-0479">Metal-binding</keyword>
<keyword id="KW-0520">NAD</keyword>
<keyword id="KW-0521">NADP</keyword>
<keyword id="KW-0560">Oxidoreductase</keyword>
<keyword id="KW-0664">Pyridoxine biosynthesis</keyword>
<gene>
    <name evidence="1" type="primary">pdxA</name>
    <name type="ordered locus">CYA_2324</name>
</gene>
<proteinExistence type="inferred from homology"/>
<comment type="function">
    <text evidence="1">Catalyzes the NAD(P)-dependent oxidation of 4-(phosphooxy)-L-threonine (HTP) into 2-amino-3-oxo-4-(phosphooxy)butyric acid which spontaneously decarboxylates to form 3-amino-2-oxopropyl phosphate (AHAP).</text>
</comment>
<comment type="catalytic activity">
    <reaction evidence="1">
        <text>4-(phosphooxy)-L-threonine + NAD(+) = 3-amino-2-oxopropyl phosphate + CO2 + NADH</text>
        <dbReference type="Rhea" id="RHEA:32275"/>
        <dbReference type="ChEBI" id="CHEBI:16526"/>
        <dbReference type="ChEBI" id="CHEBI:57279"/>
        <dbReference type="ChEBI" id="CHEBI:57540"/>
        <dbReference type="ChEBI" id="CHEBI:57945"/>
        <dbReference type="ChEBI" id="CHEBI:58452"/>
        <dbReference type="EC" id="1.1.1.262"/>
    </reaction>
</comment>
<comment type="cofactor">
    <cofactor evidence="1">
        <name>a divalent metal cation</name>
        <dbReference type="ChEBI" id="CHEBI:60240"/>
    </cofactor>
    <text evidence="1">Binds 1 divalent metal cation per subunit.</text>
</comment>
<comment type="pathway">
    <text evidence="1">Cofactor biosynthesis; pyridoxine 5'-phosphate biosynthesis; pyridoxine 5'-phosphate from D-erythrose 4-phosphate: step 4/5.</text>
</comment>
<comment type="subunit">
    <text evidence="1">Homodimer.</text>
</comment>
<comment type="subcellular location">
    <subcellularLocation>
        <location evidence="1">Cytoplasm</location>
    </subcellularLocation>
</comment>
<comment type="miscellaneous">
    <text evidence="1">The active site is located at the dimer interface.</text>
</comment>
<comment type="similarity">
    <text evidence="1">Belongs to the PdxA family.</text>
</comment>
<feature type="chain" id="PRO_1000051521" description="4-hydroxythreonine-4-phosphate dehydrogenase">
    <location>
        <begin position="1"/>
        <end position="349"/>
    </location>
</feature>
<feature type="binding site" evidence="1">
    <location>
        <position position="135"/>
    </location>
    <ligand>
        <name>substrate</name>
    </ligand>
</feature>
<feature type="binding site" evidence="1">
    <location>
        <position position="170"/>
    </location>
    <ligand>
        <name>a divalent metal cation</name>
        <dbReference type="ChEBI" id="CHEBI:60240"/>
        <note>ligand shared between dimeric partners</note>
    </ligand>
</feature>
<feature type="binding site" evidence="1">
    <location>
        <position position="215"/>
    </location>
    <ligand>
        <name>a divalent metal cation</name>
        <dbReference type="ChEBI" id="CHEBI:60240"/>
        <note>ligand shared between dimeric partners</note>
    </ligand>
</feature>
<feature type="binding site" evidence="1">
    <location>
        <position position="276"/>
    </location>
    <ligand>
        <name>a divalent metal cation</name>
        <dbReference type="ChEBI" id="CHEBI:60240"/>
        <note>ligand shared between dimeric partners</note>
    </ligand>
</feature>
<feature type="binding site" evidence="1">
    <location>
        <position position="284"/>
    </location>
    <ligand>
        <name>substrate</name>
    </ligand>
</feature>
<feature type="binding site" evidence="1">
    <location>
        <position position="293"/>
    </location>
    <ligand>
        <name>substrate</name>
    </ligand>
</feature>
<feature type="binding site" evidence="1">
    <location>
        <position position="302"/>
    </location>
    <ligand>
        <name>substrate</name>
    </ligand>
</feature>
<name>PDXA_SYNJA</name>
<dbReference type="EC" id="1.1.1.262" evidence="1"/>
<dbReference type="EMBL" id="CP000239">
    <property type="protein sequence ID" value="ABD00453.1"/>
    <property type="molecule type" value="Genomic_DNA"/>
</dbReference>
<dbReference type="RefSeq" id="WP_011431126.1">
    <property type="nucleotide sequence ID" value="NC_007775.1"/>
</dbReference>
<dbReference type="SMR" id="Q2JSC8"/>
<dbReference type="STRING" id="321327.CYA_2324"/>
<dbReference type="KEGG" id="cya:CYA_2324"/>
<dbReference type="eggNOG" id="COG1995">
    <property type="taxonomic scope" value="Bacteria"/>
</dbReference>
<dbReference type="HOGENOM" id="CLU_040168_0_0_3"/>
<dbReference type="OrthoDB" id="9801783at2"/>
<dbReference type="UniPathway" id="UPA00244">
    <property type="reaction ID" value="UER00312"/>
</dbReference>
<dbReference type="Proteomes" id="UP000008818">
    <property type="component" value="Chromosome"/>
</dbReference>
<dbReference type="GO" id="GO:0005737">
    <property type="term" value="C:cytoplasm"/>
    <property type="evidence" value="ECO:0007669"/>
    <property type="project" value="UniProtKB-SubCell"/>
</dbReference>
<dbReference type="GO" id="GO:0050570">
    <property type="term" value="F:4-hydroxythreonine-4-phosphate dehydrogenase activity"/>
    <property type="evidence" value="ECO:0007669"/>
    <property type="project" value="UniProtKB-UniRule"/>
</dbReference>
<dbReference type="GO" id="GO:0046872">
    <property type="term" value="F:metal ion binding"/>
    <property type="evidence" value="ECO:0007669"/>
    <property type="project" value="UniProtKB-UniRule"/>
</dbReference>
<dbReference type="GO" id="GO:0051287">
    <property type="term" value="F:NAD binding"/>
    <property type="evidence" value="ECO:0007669"/>
    <property type="project" value="InterPro"/>
</dbReference>
<dbReference type="GO" id="GO:0042823">
    <property type="term" value="P:pyridoxal phosphate biosynthetic process"/>
    <property type="evidence" value="ECO:0007669"/>
    <property type="project" value="UniProtKB-UniRule"/>
</dbReference>
<dbReference type="GO" id="GO:0008615">
    <property type="term" value="P:pyridoxine biosynthetic process"/>
    <property type="evidence" value="ECO:0007669"/>
    <property type="project" value="UniProtKB-UniRule"/>
</dbReference>
<dbReference type="Gene3D" id="3.40.718.10">
    <property type="entry name" value="Isopropylmalate Dehydrogenase"/>
    <property type="match status" value="1"/>
</dbReference>
<dbReference type="HAMAP" id="MF_00536">
    <property type="entry name" value="PdxA"/>
    <property type="match status" value="1"/>
</dbReference>
<dbReference type="InterPro" id="IPR037510">
    <property type="entry name" value="PdxA"/>
</dbReference>
<dbReference type="InterPro" id="IPR005255">
    <property type="entry name" value="PdxA_fam"/>
</dbReference>
<dbReference type="NCBIfam" id="TIGR00557">
    <property type="entry name" value="pdxA"/>
    <property type="match status" value="1"/>
</dbReference>
<dbReference type="NCBIfam" id="NF002744">
    <property type="entry name" value="PRK02746.1"/>
    <property type="match status" value="1"/>
</dbReference>
<dbReference type="PANTHER" id="PTHR30004">
    <property type="entry name" value="4-HYDROXYTHREONINE-4-PHOSPHATE DEHYDROGENASE"/>
    <property type="match status" value="1"/>
</dbReference>
<dbReference type="PANTHER" id="PTHR30004:SF6">
    <property type="entry name" value="D-THREONATE 4-PHOSPHATE DEHYDROGENASE"/>
    <property type="match status" value="1"/>
</dbReference>
<dbReference type="Pfam" id="PF04166">
    <property type="entry name" value="PdxA"/>
    <property type="match status" value="1"/>
</dbReference>
<dbReference type="SUPFAM" id="SSF53659">
    <property type="entry name" value="Isocitrate/Isopropylmalate dehydrogenase-like"/>
    <property type="match status" value="1"/>
</dbReference>
<reference key="1">
    <citation type="journal article" date="2007" name="ISME J.">
        <title>Population level functional diversity in a microbial community revealed by comparative genomic and metagenomic analyses.</title>
        <authorList>
            <person name="Bhaya D."/>
            <person name="Grossman A.R."/>
            <person name="Steunou A.-S."/>
            <person name="Khuri N."/>
            <person name="Cohan F.M."/>
            <person name="Hamamura N."/>
            <person name="Melendrez M.C."/>
            <person name="Bateson M.M."/>
            <person name="Ward D.M."/>
            <person name="Heidelberg J.F."/>
        </authorList>
    </citation>
    <scope>NUCLEOTIDE SEQUENCE [LARGE SCALE GENOMIC DNA]</scope>
    <source>
        <strain>JA-3-3Ab</strain>
    </source>
</reference>
<sequence length="349" mass="37136">MSLLLPKLALTLGDPAGIGPEIVLKALADPQVQACAQITVVGERQVLEATYCLLRQRGATDLADPAGIPVLEGGSGFYLEPSRVGRGDVASGAASFAYLKTAIEEALRGQFQGIVTAPIAKYLWHQAGYPFPGQTEVLAQLSGSERYGMLFVARSPHSGWQIRVLLATTHIPLSQVPLTLTPELVRAKLDLLVGSLRKLFGIVNPVIAVAGLNPHAGEQGQLGQEEKTWLAELLRTYPHAKIWGPLPPDTMWLAPAQAWYGQGAPAVADAYLALYHDQGLIPVKLLAFDRAVNLTLGLPFIRTSPDHGTAFDLAGQGVARAESLKQAILLAAELALSSAAASRSLQAQR</sequence>
<evidence type="ECO:0000255" key="1">
    <source>
        <dbReference type="HAMAP-Rule" id="MF_00536"/>
    </source>
</evidence>